<comment type="catalytic activity">
    <reaction evidence="1">
        <text>(6R)-10-formyltetrahydrofolate + 5-amino-1-(5-phospho-beta-D-ribosyl)imidazole-4-carboxamide = 5-formamido-1-(5-phospho-D-ribosyl)imidazole-4-carboxamide + (6S)-5,6,7,8-tetrahydrofolate</text>
        <dbReference type="Rhea" id="RHEA:22192"/>
        <dbReference type="ChEBI" id="CHEBI:57453"/>
        <dbReference type="ChEBI" id="CHEBI:58467"/>
        <dbReference type="ChEBI" id="CHEBI:58475"/>
        <dbReference type="ChEBI" id="CHEBI:195366"/>
        <dbReference type="EC" id="2.1.2.3"/>
    </reaction>
</comment>
<comment type="catalytic activity">
    <reaction evidence="1">
        <text>IMP + H2O = 5-formamido-1-(5-phospho-D-ribosyl)imidazole-4-carboxamide</text>
        <dbReference type="Rhea" id="RHEA:18445"/>
        <dbReference type="ChEBI" id="CHEBI:15377"/>
        <dbReference type="ChEBI" id="CHEBI:58053"/>
        <dbReference type="ChEBI" id="CHEBI:58467"/>
        <dbReference type="EC" id="3.5.4.10"/>
    </reaction>
</comment>
<comment type="pathway">
    <text evidence="1">Purine metabolism; IMP biosynthesis via de novo pathway; 5-formamido-1-(5-phospho-D-ribosyl)imidazole-4-carboxamide from 5-amino-1-(5-phospho-D-ribosyl)imidazole-4-carboxamide (10-formyl THF route): step 1/1.</text>
</comment>
<comment type="pathway">
    <text evidence="1">Purine metabolism; IMP biosynthesis via de novo pathway; IMP from 5-formamido-1-(5-phospho-D-ribosyl)imidazole-4-carboxamide: step 1/1.</text>
</comment>
<comment type="domain">
    <text evidence="1">The IMP cyclohydrolase activity resides in the N-terminal region.</text>
</comment>
<comment type="similarity">
    <text evidence="1">Belongs to the PurH family.</text>
</comment>
<sequence>MKKRALVSVSDKTGVVEFVKGLLEQGIEVISTGGTKKLLEKNGLQVIGISEVTGFPEIMDGRVKTLHPNIHGGLLAVRDNETHVAQMNELGMEPIDFVIVNLYPFKETIAKPDVTFADAIENIDIGGPTMIRSAAKNHKFVSVIVDPVDYDVVLAELKENGEVKEETKRKLAAKVFRHTAAYDALISNYLTEQMGEESPETLTVTFEKKQDLRYGENPHQKATFYKAPFAVTSSVAYAEQLHGKELSYNNINDADAALSIVKEFTEPAVVAVKHMNPCGVGVGTDIHEAYTRAYEADPVSIFGGIIAANREIDKATAEKLHEIFLEIIIAPSFSKEALEVLQSKKNLRLLTVNIEKATSASKKLTSVQGGLLVQEEDTLSLDESTISIPTKREPSEQEWKDLKLAWKVVKHVKSNAIVLAKDDMTIGVGAGQMNRVGSAKIAITQAGEKAQGSALASDAFFPMPDTVEEAAKAGITAIIQPGGSIRDEDSIKVADTYGIAMVFTGVRHFKH</sequence>
<evidence type="ECO:0000255" key="1">
    <source>
        <dbReference type="HAMAP-Rule" id="MF_00139"/>
    </source>
</evidence>
<evidence type="ECO:0000255" key="2">
    <source>
        <dbReference type="PROSITE-ProRule" id="PRU01202"/>
    </source>
</evidence>
<proteinExistence type="inferred from homology"/>
<accession>Q6HPA0</accession>
<feature type="chain" id="PRO_1000018842" description="Bifunctional purine biosynthesis protein PurH">
    <location>
        <begin position="1"/>
        <end position="511"/>
    </location>
</feature>
<feature type="domain" description="MGS-like" evidence="2">
    <location>
        <begin position="1"/>
        <end position="145"/>
    </location>
</feature>
<dbReference type="EC" id="2.1.2.3" evidence="1"/>
<dbReference type="EC" id="3.5.4.10" evidence="1"/>
<dbReference type="EMBL" id="AE017355">
    <property type="protein sequence ID" value="AAT61288.1"/>
    <property type="molecule type" value="Genomic_DNA"/>
</dbReference>
<dbReference type="RefSeq" id="WP_000745444.1">
    <property type="nucleotide sequence ID" value="NC_005957.1"/>
</dbReference>
<dbReference type="RefSeq" id="YP_034620.1">
    <property type="nucleotide sequence ID" value="NC_005957.1"/>
</dbReference>
<dbReference type="SMR" id="Q6HPA0"/>
<dbReference type="KEGG" id="btk:BT9727_0270"/>
<dbReference type="PATRIC" id="fig|281309.8.peg.287"/>
<dbReference type="HOGENOM" id="CLU_016316_5_2_9"/>
<dbReference type="UniPathway" id="UPA00074">
    <property type="reaction ID" value="UER00133"/>
</dbReference>
<dbReference type="UniPathway" id="UPA00074">
    <property type="reaction ID" value="UER00135"/>
</dbReference>
<dbReference type="Proteomes" id="UP000001301">
    <property type="component" value="Chromosome"/>
</dbReference>
<dbReference type="GO" id="GO:0005829">
    <property type="term" value="C:cytosol"/>
    <property type="evidence" value="ECO:0007669"/>
    <property type="project" value="TreeGrafter"/>
</dbReference>
<dbReference type="GO" id="GO:0003937">
    <property type="term" value="F:IMP cyclohydrolase activity"/>
    <property type="evidence" value="ECO:0007669"/>
    <property type="project" value="UniProtKB-UniRule"/>
</dbReference>
<dbReference type="GO" id="GO:0004643">
    <property type="term" value="F:phosphoribosylaminoimidazolecarboxamide formyltransferase activity"/>
    <property type="evidence" value="ECO:0007669"/>
    <property type="project" value="UniProtKB-UniRule"/>
</dbReference>
<dbReference type="GO" id="GO:0006189">
    <property type="term" value="P:'de novo' IMP biosynthetic process"/>
    <property type="evidence" value="ECO:0007669"/>
    <property type="project" value="UniProtKB-UniRule"/>
</dbReference>
<dbReference type="CDD" id="cd01421">
    <property type="entry name" value="IMPCH"/>
    <property type="match status" value="1"/>
</dbReference>
<dbReference type="FunFam" id="3.40.140.20:FF:000001">
    <property type="entry name" value="Bifunctional purine biosynthesis protein PurH"/>
    <property type="match status" value="1"/>
</dbReference>
<dbReference type="FunFam" id="3.40.140.20:FF:000002">
    <property type="entry name" value="Bifunctional purine biosynthesis protein PurH"/>
    <property type="match status" value="1"/>
</dbReference>
<dbReference type="FunFam" id="3.40.50.1380:FF:000001">
    <property type="entry name" value="Bifunctional purine biosynthesis protein PurH"/>
    <property type="match status" value="1"/>
</dbReference>
<dbReference type="Gene3D" id="3.40.140.20">
    <property type="match status" value="2"/>
</dbReference>
<dbReference type="Gene3D" id="3.40.50.1380">
    <property type="entry name" value="Methylglyoxal synthase-like domain"/>
    <property type="match status" value="1"/>
</dbReference>
<dbReference type="HAMAP" id="MF_00139">
    <property type="entry name" value="PurH"/>
    <property type="match status" value="1"/>
</dbReference>
<dbReference type="InterPro" id="IPR024051">
    <property type="entry name" value="AICAR_Tfase_dup_dom_sf"/>
</dbReference>
<dbReference type="InterPro" id="IPR016193">
    <property type="entry name" value="Cytidine_deaminase-like"/>
</dbReference>
<dbReference type="InterPro" id="IPR011607">
    <property type="entry name" value="MGS-like_dom"/>
</dbReference>
<dbReference type="InterPro" id="IPR036914">
    <property type="entry name" value="MGS-like_dom_sf"/>
</dbReference>
<dbReference type="InterPro" id="IPR002695">
    <property type="entry name" value="PurH-like"/>
</dbReference>
<dbReference type="NCBIfam" id="NF002049">
    <property type="entry name" value="PRK00881.1"/>
    <property type="match status" value="1"/>
</dbReference>
<dbReference type="NCBIfam" id="TIGR00355">
    <property type="entry name" value="purH"/>
    <property type="match status" value="1"/>
</dbReference>
<dbReference type="PANTHER" id="PTHR11692:SF0">
    <property type="entry name" value="BIFUNCTIONAL PURINE BIOSYNTHESIS PROTEIN ATIC"/>
    <property type="match status" value="1"/>
</dbReference>
<dbReference type="PANTHER" id="PTHR11692">
    <property type="entry name" value="BIFUNCTIONAL PURINE BIOSYNTHESIS PROTEIN PURH"/>
    <property type="match status" value="1"/>
</dbReference>
<dbReference type="Pfam" id="PF01808">
    <property type="entry name" value="AICARFT_IMPCHas"/>
    <property type="match status" value="1"/>
</dbReference>
<dbReference type="Pfam" id="PF02142">
    <property type="entry name" value="MGS"/>
    <property type="match status" value="1"/>
</dbReference>
<dbReference type="PIRSF" id="PIRSF000414">
    <property type="entry name" value="AICARFT_IMPCHas"/>
    <property type="match status" value="1"/>
</dbReference>
<dbReference type="SMART" id="SM00798">
    <property type="entry name" value="AICARFT_IMPCHas"/>
    <property type="match status" value="1"/>
</dbReference>
<dbReference type="SMART" id="SM00851">
    <property type="entry name" value="MGS"/>
    <property type="match status" value="1"/>
</dbReference>
<dbReference type="SUPFAM" id="SSF53927">
    <property type="entry name" value="Cytidine deaminase-like"/>
    <property type="match status" value="1"/>
</dbReference>
<dbReference type="SUPFAM" id="SSF52335">
    <property type="entry name" value="Methylglyoxal synthase-like"/>
    <property type="match status" value="1"/>
</dbReference>
<dbReference type="PROSITE" id="PS51855">
    <property type="entry name" value="MGS"/>
    <property type="match status" value="1"/>
</dbReference>
<protein>
    <recommendedName>
        <fullName evidence="1">Bifunctional purine biosynthesis protein PurH</fullName>
    </recommendedName>
    <domain>
        <recommendedName>
            <fullName evidence="1">Phosphoribosylaminoimidazolecarboxamide formyltransferase</fullName>
            <ecNumber evidence="1">2.1.2.3</ecNumber>
        </recommendedName>
        <alternativeName>
            <fullName evidence="1">AICAR transformylase</fullName>
        </alternativeName>
    </domain>
    <domain>
        <recommendedName>
            <fullName evidence="1">IMP cyclohydrolase</fullName>
            <ecNumber evidence="1">3.5.4.10</ecNumber>
        </recommendedName>
        <alternativeName>
            <fullName evidence="1">ATIC</fullName>
        </alternativeName>
        <alternativeName>
            <fullName evidence="1">IMP synthase</fullName>
        </alternativeName>
        <alternativeName>
            <fullName evidence="1">Inosinicase</fullName>
        </alternativeName>
    </domain>
</protein>
<organism>
    <name type="scientific">Bacillus thuringiensis subsp. konkukian (strain 97-27)</name>
    <dbReference type="NCBI Taxonomy" id="281309"/>
    <lineage>
        <taxon>Bacteria</taxon>
        <taxon>Bacillati</taxon>
        <taxon>Bacillota</taxon>
        <taxon>Bacilli</taxon>
        <taxon>Bacillales</taxon>
        <taxon>Bacillaceae</taxon>
        <taxon>Bacillus</taxon>
        <taxon>Bacillus cereus group</taxon>
    </lineage>
</organism>
<gene>
    <name evidence="1" type="primary">purH</name>
    <name type="ordered locus">BT9727_0270</name>
</gene>
<reference key="1">
    <citation type="journal article" date="2006" name="J. Bacteriol.">
        <title>Pathogenomic sequence analysis of Bacillus cereus and Bacillus thuringiensis isolates closely related to Bacillus anthracis.</title>
        <authorList>
            <person name="Han C.S."/>
            <person name="Xie G."/>
            <person name="Challacombe J.F."/>
            <person name="Altherr M.R."/>
            <person name="Bhotika S.S."/>
            <person name="Bruce D."/>
            <person name="Campbell C.S."/>
            <person name="Campbell M.L."/>
            <person name="Chen J."/>
            <person name="Chertkov O."/>
            <person name="Cleland C."/>
            <person name="Dimitrijevic M."/>
            <person name="Doggett N.A."/>
            <person name="Fawcett J.J."/>
            <person name="Glavina T."/>
            <person name="Goodwin L.A."/>
            <person name="Hill K.K."/>
            <person name="Hitchcock P."/>
            <person name="Jackson P.J."/>
            <person name="Keim P."/>
            <person name="Kewalramani A.R."/>
            <person name="Longmire J."/>
            <person name="Lucas S."/>
            <person name="Malfatti S."/>
            <person name="McMurry K."/>
            <person name="Meincke L.J."/>
            <person name="Misra M."/>
            <person name="Moseman B.L."/>
            <person name="Mundt M."/>
            <person name="Munk A.C."/>
            <person name="Okinaka R.T."/>
            <person name="Parson-Quintana B."/>
            <person name="Reilly L.P."/>
            <person name="Richardson P."/>
            <person name="Robinson D.L."/>
            <person name="Rubin E."/>
            <person name="Saunders E."/>
            <person name="Tapia R."/>
            <person name="Tesmer J.G."/>
            <person name="Thayer N."/>
            <person name="Thompson L.S."/>
            <person name="Tice H."/>
            <person name="Ticknor L.O."/>
            <person name="Wills P.L."/>
            <person name="Brettin T.S."/>
            <person name="Gilna P."/>
        </authorList>
    </citation>
    <scope>NUCLEOTIDE SEQUENCE [LARGE SCALE GENOMIC DNA]</scope>
    <source>
        <strain>97-27</strain>
    </source>
</reference>
<name>PUR9_BACHK</name>
<keyword id="KW-0378">Hydrolase</keyword>
<keyword id="KW-0511">Multifunctional enzyme</keyword>
<keyword id="KW-0658">Purine biosynthesis</keyword>
<keyword id="KW-0808">Transferase</keyword>